<protein>
    <recommendedName>
        <fullName evidence="1">Protein RecA</fullName>
    </recommendedName>
    <alternativeName>
        <fullName evidence="1">Recombinase A</fullName>
    </alternativeName>
</protein>
<sequence>MAGTDREKALDAALAQIERQFGKGAVMRMGDRSKEPIEVIPTGSTALDVALGVGGLPRGRVIEVYGPESSGKTTLTLHAVANAQKAGGQVAFVDAEHALDPEYAQKLGVDIDNLILSQPDNGEQALEIVDMLVRSGALDLIVIDSVAALVPRAEIEGEMGDSHVGLQARLMSQALRKITSALNQSKTTAIFINQLREKIGVMFGSPETTTGGRALKFYASVRLDIRRIETLKDGTDAVGNRTRVKVVKNKVAPPFKQAEFDILYGQGISREGGLIDMGVEHGFVRKAGAWYTYEGDQLGQGKENARNFLKDNPDLANEIEKKIKEKLGVGVRPEEPTATESGPDAATAESAPAVPAPATAKVTKAKAAAAKS</sequence>
<keyword id="KW-0067">ATP-binding</keyword>
<keyword id="KW-0963">Cytoplasm</keyword>
<keyword id="KW-0227">DNA damage</keyword>
<keyword id="KW-0233">DNA recombination</keyword>
<keyword id="KW-0234">DNA repair</keyword>
<keyword id="KW-0238">DNA-binding</keyword>
<keyword id="KW-0547">Nucleotide-binding</keyword>
<keyword id="KW-0742">SOS response</keyword>
<organism>
    <name type="scientific">Streptomyces ambofaciens</name>
    <dbReference type="NCBI Taxonomy" id="1889"/>
    <lineage>
        <taxon>Bacteria</taxon>
        <taxon>Bacillati</taxon>
        <taxon>Actinomycetota</taxon>
        <taxon>Actinomycetes</taxon>
        <taxon>Kitasatosporales</taxon>
        <taxon>Streptomycetaceae</taxon>
        <taxon>Streptomyces</taxon>
    </lineage>
</organism>
<accession>P41054</accession>
<gene>
    <name evidence="1" type="primary">recA</name>
</gene>
<name>RECA_STRAM</name>
<comment type="function">
    <text evidence="1">Can catalyze the hydrolysis of ATP in the presence of single-stranded DNA, the ATP-dependent uptake of single-stranded DNA by duplex DNA, and the ATP-dependent hybridization of homologous single-stranded DNAs. It interacts with LexA causing its activation and leading to its autocatalytic cleavage.</text>
</comment>
<comment type="subcellular location">
    <subcellularLocation>
        <location evidence="1">Cytoplasm</location>
    </subcellularLocation>
</comment>
<comment type="similarity">
    <text evidence="1">Belongs to the RecA family.</text>
</comment>
<dbReference type="EMBL" id="Z30324">
    <property type="protein sequence ID" value="CAA82979.1"/>
    <property type="molecule type" value="Genomic_DNA"/>
</dbReference>
<dbReference type="RefSeq" id="WP_053138098.1">
    <property type="nucleotide sequence ID" value="NZ_CP012949.1"/>
</dbReference>
<dbReference type="SMR" id="P41054"/>
<dbReference type="PATRIC" id="fig|1889.10.peg.5275"/>
<dbReference type="OMA" id="DSKMGLH"/>
<dbReference type="OrthoDB" id="9776733at2"/>
<dbReference type="GO" id="GO:0005829">
    <property type="term" value="C:cytosol"/>
    <property type="evidence" value="ECO:0007669"/>
    <property type="project" value="TreeGrafter"/>
</dbReference>
<dbReference type="GO" id="GO:0005524">
    <property type="term" value="F:ATP binding"/>
    <property type="evidence" value="ECO:0007669"/>
    <property type="project" value="UniProtKB-UniRule"/>
</dbReference>
<dbReference type="GO" id="GO:0016887">
    <property type="term" value="F:ATP hydrolysis activity"/>
    <property type="evidence" value="ECO:0007669"/>
    <property type="project" value="InterPro"/>
</dbReference>
<dbReference type="GO" id="GO:0140664">
    <property type="term" value="F:ATP-dependent DNA damage sensor activity"/>
    <property type="evidence" value="ECO:0007669"/>
    <property type="project" value="InterPro"/>
</dbReference>
<dbReference type="GO" id="GO:0003684">
    <property type="term" value="F:damaged DNA binding"/>
    <property type="evidence" value="ECO:0007669"/>
    <property type="project" value="UniProtKB-UniRule"/>
</dbReference>
<dbReference type="GO" id="GO:0003697">
    <property type="term" value="F:single-stranded DNA binding"/>
    <property type="evidence" value="ECO:0007669"/>
    <property type="project" value="UniProtKB-UniRule"/>
</dbReference>
<dbReference type="GO" id="GO:0006310">
    <property type="term" value="P:DNA recombination"/>
    <property type="evidence" value="ECO:0007669"/>
    <property type="project" value="UniProtKB-UniRule"/>
</dbReference>
<dbReference type="GO" id="GO:0006281">
    <property type="term" value="P:DNA repair"/>
    <property type="evidence" value="ECO:0007669"/>
    <property type="project" value="UniProtKB-UniRule"/>
</dbReference>
<dbReference type="GO" id="GO:0009432">
    <property type="term" value="P:SOS response"/>
    <property type="evidence" value="ECO:0007669"/>
    <property type="project" value="UniProtKB-UniRule"/>
</dbReference>
<dbReference type="CDD" id="cd00983">
    <property type="entry name" value="RecA"/>
    <property type="match status" value="1"/>
</dbReference>
<dbReference type="FunFam" id="3.40.50.300:FF:000087">
    <property type="entry name" value="Recombinase RecA"/>
    <property type="match status" value="1"/>
</dbReference>
<dbReference type="Gene3D" id="3.40.50.300">
    <property type="entry name" value="P-loop containing nucleotide triphosphate hydrolases"/>
    <property type="match status" value="1"/>
</dbReference>
<dbReference type="HAMAP" id="MF_00268">
    <property type="entry name" value="RecA"/>
    <property type="match status" value="1"/>
</dbReference>
<dbReference type="InterPro" id="IPR003593">
    <property type="entry name" value="AAA+_ATPase"/>
</dbReference>
<dbReference type="InterPro" id="IPR013765">
    <property type="entry name" value="DNA_recomb/repair_RecA"/>
</dbReference>
<dbReference type="InterPro" id="IPR020584">
    <property type="entry name" value="DNA_recomb/repair_RecA_CS"/>
</dbReference>
<dbReference type="InterPro" id="IPR027417">
    <property type="entry name" value="P-loop_NTPase"/>
</dbReference>
<dbReference type="InterPro" id="IPR049261">
    <property type="entry name" value="RecA-like_C"/>
</dbReference>
<dbReference type="InterPro" id="IPR049428">
    <property type="entry name" value="RecA-like_N"/>
</dbReference>
<dbReference type="InterPro" id="IPR020588">
    <property type="entry name" value="RecA_ATP-bd"/>
</dbReference>
<dbReference type="InterPro" id="IPR023400">
    <property type="entry name" value="RecA_C_sf"/>
</dbReference>
<dbReference type="InterPro" id="IPR020587">
    <property type="entry name" value="RecA_monomer-monomer_interface"/>
</dbReference>
<dbReference type="NCBIfam" id="TIGR02012">
    <property type="entry name" value="tigrfam_recA"/>
    <property type="match status" value="1"/>
</dbReference>
<dbReference type="PANTHER" id="PTHR45900:SF1">
    <property type="entry name" value="MITOCHONDRIAL DNA REPAIR PROTEIN RECA HOMOLOG-RELATED"/>
    <property type="match status" value="1"/>
</dbReference>
<dbReference type="PANTHER" id="PTHR45900">
    <property type="entry name" value="RECA"/>
    <property type="match status" value="1"/>
</dbReference>
<dbReference type="Pfam" id="PF00154">
    <property type="entry name" value="RecA"/>
    <property type="match status" value="1"/>
</dbReference>
<dbReference type="Pfam" id="PF21096">
    <property type="entry name" value="RecA_C"/>
    <property type="match status" value="1"/>
</dbReference>
<dbReference type="PRINTS" id="PR00142">
    <property type="entry name" value="RECA"/>
</dbReference>
<dbReference type="SMART" id="SM00382">
    <property type="entry name" value="AAA"/>
    <property type="match status" value="1"/>
</dbReference>
<dbReference type="SUPFAM" id="SSF52540">
    <property type="entry name" value="P-loop containing nucleoside triphosphate hydrolases"/>
    <property type="match status" value="1"/>
</dbReference>
<dbReference type="SUPFAM" id="SSF54752">
    <property type="entry name" value="RecA protein, C-terminal domain"/>
    <property type="match status" value="1"/>
</dbReference>
<dbReference type="PROSITE" id="PS00321">
    <property type="entry name" value="RECA_1"/>
    <property type="match status" value="1"/>
</dbReference>
<dbReference type="PROSITE" id="PS50162">
    <property type="entry name" value="RECA_2"/>
    <property type="match status" value="1"/>
</dbReference>
<dbReference type="PROSITE" id="PS50163">
    <property type="entry name" value="RECA_3"/>
    <property type="match status" value="1"/>
</dbReference>
<feature type="chain" id="PRO_0000122851" description="Protein RecA">
    <location>
        <begin position="1"/>
        <end position="372"/>
    </location>
</feature>
<feature type="region of interest" description="Disordered" evidence="2">
    <location>
        <begin position="328"/>
        <end position="359"/>
    </location>
</feature>
<feature type="compositionally biased region" description="Low complexity" evidence="2">
    <location>
        <begin position="345"/>
        <end position="359"/>
    </location>
</feature>
<feature type="binding site" evidence="1">
    <location>
        <begin position="66"/>
        <end position="73"/>
    </location>
    <ligand>
        <name>ATP</name>
        <dbReference type="ChEBI" id="CHEBI:30616"/>
    </ligand>
</feature>
<evidence type="ECO:0000255" key="1">
    <source>
        <dbReference type="HAMAP-Rule" id="MF_00268"/>
    </source>
</evidence>
<evidence type="ECO:0000256" key="2">
    <source>
        <dbReference type="SAM" id="MobiDB-lite"/>
    </source>
</evidence>
<reference key="1">
    <citation type="submission" date="1994-02" db="EMBL/GenBank/DDBJ databases">
        <authorList>
            <person name="Aigle B."/>
            <person name="Schneider D."/>
            <person name="Decaris B."/>
        </authorList>
    </citation>
    <scope>NUCLEOTIDE SEQUENCE [GENOMIC DNA]</scope>
    <source>
        <strain>DSM 40697 / NRRL 2531 / ETH 6703</strain>
    </source>
</reference>
<proteinExistence type="inferred from homology"/>